<sequence length="1305" mass="148099">MMLGLESLPDPMETWEIIETIGKGTYGKVYKVANKRDGSLAAVKVLDPVSDMDEEIEAEYNILQFLPSHPNVVKFYGMFYKADRCVGGQLWLVLELCNGGSVTELVKGLLRCGKRLDEAVISYILYGALLGLQHLHCHRIIHRDVKGNNILLTTEGGVKLVDFGVSAQLTSTRLRRNTSVGTPFWMAPEVIACEQQYDSSYDARCDVWSLGITAIELGDGDPPLFEMHPVKMLFKIPRNPPPTLLHPDSWCEEFNHFISQCLIKDFEKRPSVTHLLDHPFIKGTQGKVLCLQKQLAKVLQDQKHRNPVAKTRHERMHTGRPHRVEDAGKCCLEDDLVNLEVLDEDTIIYWLQKRYADALIYTYVGDILIALNPFQNLSIYSPQFSRLYHGVKRSSNPPHIFASADNAYQCLVTFSKDQCIVISGESGSGKTESAHLIVQHLTFLGKADNQTLRQKILQVNSLVEAFGNARTAINDNSSRFGKYLEMMFTPTGAVMGARISEYLLEKSRVIQQAAGEKNFHIFYYIYAGLYHQKKLAEFRLPEEKPPRYIAGETERVMQDITSKESYRTQFEAIQHCFKIIGFADKEVHSVYRILAGILNIGSIEFAAISSQHQTDKSEVPNPEALENAACVLCISSEELQEALTSHCVVTRGETIVRANTVDRAEDVRDAMSKALYGRLFSWIVNRINTLLQPDKNICSAEDRMNVGILDIFGFEDFQRNSFEQLCINIANEQIQYYFNQHVFALEQMEYKNEGVDAVLVQYEDNRPLLDMFLQKPLGLLALLDEESRFPQGTDQTLVDKFEDNLRCKFFWRPKGVELCFGIQHYAGPVLYDASGVLEKNRDTLPADVVVVLRTSENKLLQQLFSIPLTKTGNLAQTRAKITASSRSLPPHFSAGRAKVDTLEVIRHPEETTNMKRQTMASYFRYSLMDLLSKMVVGQPHFIRCIKPNDDRKALQFSQDRVLAQLRSTGILETVSIRRQGYSHRIFFEEFVKRYYYLAFRAHQTPPANKESCVAILEKSRLDHWVLGKTKVFLKYYHVEQLNLLLREVMGRVVMLQAYTKGWLGARRYKRAKEKREKGAITIQSAWRGYDARRKLKQRSRRRSESEAHIHTVLQTTPDQKYCPDSGGESNRGHEETSRNCPAEADTDGHPQAQSPPTGCDVTSGHADTAAGYTVAELSVAGTDVSPSLVYHTASAHQRLSPCEDSLKPGSEEGLSQKQRAPRRRCQQPKMLSSPEDTMYYNQLNGTLEYQGSQRKPRKLGQIKVLDGEDQYYKCLSPGACAPEETHSVHPFFFSSSPREDPFAQH</sequence>
<reference key="1">
    <citation type="submission" date="2008-09" db="EMBL/GenBank/DDBJ databases">
        <title>Myosin IIIB expression in mouse retina.</title>
        <authorList>
            <person name="Dalal J.S."/>
            <person name="Dose A.C."/>
            <person name="Burnside B."/>
            <person name="Battelle B.-A."/>
        </authorList>
    </citation>
    <scope>NUCLEOTIDE SEQUENCE [MRNA] (ISOFORMS 1 AND 2)</scope>
    <source>
        <strain>C57BL/6J</strain>
        <tissue>Retina</tissue>
    </source>
</reference>
<reference key="2">
    <citation type="journal article" date="2009" name="PLoS Biol.">
        <title>Lineage-specific biology revealed by a finished genome assembly of the mouse.</title>
        <authorList>
            <person name="Church D.M."/>
            <person name="Goodstadt L."/>
            <person name="Hillier L.W."/>
            <person name="Zody M.C."/>
            <person name="Goldstein S."/>
            <person name="She X."/>
            <person name="Bult C.J."/>
            <person name="Agarwala R."/>
            <person name="Cherry J.L."/>
            <person name="DiCuccio M."/>
            <person name="Hlavina W."/>
            <person name="Kapustin Y."/>
            <person name="Meric P."/>
            <person name="Maglott D."/>
            <person name="Birtle Z."/>
            <person name="Marques A.C."/>
            <person name="Graves T."/>
            <person name="Zhou S."/>
            <person name="Teague B."/>
            <person name="Potamousis K."/>
            <person name="Churas C."/>
            <person name="Place M."/>
            <person name="Herschleb J."/>
            <person name="Runnheim R."/>
            <person name="Forrest D."/>
            <person name="Amos-Landgraf J."/>
            <person name="Schwartz D.C."/>
            <person name="Cheng Z."/>
            <person name="Lindblad-Toh K."/>
            <person name="Eichler E.E."/>
            <person name="Ponting C.P."/>
        </authorList>
    </citation>
    <scope>NUCLEOTIDE SEQUENCE [LARGE SCALE GENOMIC DNA]</scope>
    <source>
        <strain>C57BL/6J</strain>
    </source>
</reference>
<reference key="3">
    <citation type="journal article" date="2012" name="Curr. Biol.">
        <title>Myosin IIIB uses an actin-binding motif in its espin-1 cargo to reach the tips of actin protrusions.</title>
        <authorList>
            <person name="Merritt R.C."/>
            <person name="Manor U."/>
            <person name="Salles F.T."/>
            <person name="Grati M."/>
            <person name="Dose A.C."/>
            <person name="Unrath W.C."/>
            <person name="Quintero O.A."/>
            <person name="Yengo C.M."/>
            <person name="Kachar B."/>
        </authorList>
    </citation>
    <scope>FUNCTION</scope>
</reference>
<reference key="4">
    <citation type="journal article" date="2016" name="J. Cell Biol.">
        <title>Class III myosins shape the auditory hair bundles by limiting microvilli and stereocilia growth.</title>
        <authorList>
            <person name="Lelli A."/>
            <person name="Michel V."/>
            <person name="Boutet de Monvel J."/>
            <person name="Cortese M."/>
            <person name="Bosch-Grau M."/>
            <person name="Aghaie A."/>
            <person name="Perfettini I."/>
            <person name="Dupont T."/>
            <person name="Avan P."/>
            <person name="El-Amraoui A."/>
            <person name="Petit C."/>
        </authorList>
    </citation>
    <scope>FUNCTION</scope>
    <scope>DISRUPTION PHENOTYPE</scope>
    <scope>SUBCELLULAR LOCATION</scope>
    <scope>TISSUE SPECIFICITY</scope>
</reference>
<reference key="5">
    <citation type="journal article" date="2016" name="Nat. Commun.">
        <title>Stereocilia-staircase spacing is influenced by myosin III motors and their cargos espin-1 and espin-like.</title>
        <authorList>
            <person name="Ebrahim S."/>
            <person name="Avenarius M.R."/>
            <person name="Grati M."/>
            <person name="Krey J.F."/>
            <person name="Windsor A.M."/>
            <person name="Sousa A.D."/>
            <person name="Ballesteros A."/>
            <person name="Cui R."/>
            <person name="Millis B.A."/>
            <person name="Salles F.T."/>
            <person name="Baird M.A."/>
            <person name="Davidson M.W."/>
            <person name="Jones S.M."/>
            <person name="Choi D."/>
            <person name="Dong L."/>
            <person name="Raval M.H."/>
            <person name="Yengo C.M."/>
            <person name="Barr-Gillespie P.G."/>
            <person name="Kachar B."/>
        </authorList>
    </citation>
    <scope>INTERACTION WITH ESPN AND ESPNL</scope>
    <scope>TISSUE SPECIFICITY</scope>
</reference>
<reference key="6">
    <citation type="journal article" date="2016" name="Elife">
        <title>Myosin III-mediated cross-linking and stimulation of actin bundling activity of Espin.</title>
        <authorList>
            <person name="Liu H."/>
            <person name="Li J."/>
            <person name="Raval M.H."/>
            <person name="Yao N."/>
            <person name="Deng X."/>
            <person name="Lu Q."/>
            <person name="Nie S."/>
            <person name="Feng W."/>
            <person name="Wan J."/>
            <person name="Yengo C.M."/>
            <person name="Liu W."/>
            <person name="Zhang M."/>
        </authorList>
    </citation>
    <scope>X-RAY CRYSTALLOGRAPHY (1.65 ANGSTROMS) OF 1216-1251</scope>
    <scope>INTERACTION WITH ESPN</scope>
</reference>
<evidence type="ECO:0000250" key="1"/>
<evidence type="ECO:0000250" key="2">
    <source>
        <dbReference type="UniProtKB" id="Q8WXR4"/>
    </source>
</evidence>
<evidence type="ECO:0000255" key="3">
    <source>
        <dbReference type="PROSITE-ProRule" id="PRU00116"/>
    </source>
</evidence>
<evidence type="ECO:0000255" key="4">
    <source>
        <dbReference type="PROSITE-ProRule" id="PRU00159"/>
    </source>
</evidence>
<evidence type="ECO:0000255" key="5">
    <source>
        <dbReference type="PROSITE-ProRule" id="PRU00782"/>
    </source>
</evidence>
<evidence type="ECO:0000255" key="6">
    <source>
        <dbReference type="PROSITE-ProRule" id="PRU10027"/>
    </source>
</evidence>
<evidence type="ECO:0000256" key="7">
    <source>
        <dbReference type="SAM" id="MobiDB-lite"/>
    </source>
</evidence>
<evidence type="ECO:0000269" key="8">
    <source>
    </source>
</evidence>
<evidence type="ECO:0000269" key="9">
    <source>
    </source>
</evidence>
<evidence type="ECO:0000269" key="10">
    <source>
    </source>
</evidence>
<evidence type="ECO:0000269" key="11">
    <source>
    </source>
</evidence>
<evidence type="ECO:0000303" key="12">
    <source ref="1"/>
</evidence>
<evidence type="ECO:0000305" key="13"/>
<evidence type="ECO:0007829" key="14">
    <source>
        <dbReference type="PDB" id="5ET0"/>
    </source>
</evidence>
<evidence type="ECO:0007829" key="15">
    <source>
        <dbReference type="PDB" id="5ET1"/>
    </source>
</evidence>
<organism>
    <name type="scientific">Mus musculus</name>
    <name type="common">Mouse</name>
    <dbReference type="NCBI Taxonomy" id="10090"/>
    <lineage>
        <taxon>Eukaryota</taxon>
        <taxon>Metazoa</taxon>
        <taxon>Chordata</taxon>
        <taxon>Craniata</taxon>
        <taxon>Vertebrata</taxon>
        <taxon>Euteleostomi</taxon>
        <taxon>Mammalia</taxon>
        <taxon>Eutheria</taxon>
        <taxon>Euarchontoglires</taxon>
        <taxon>Glires</taxon>
        <taxon>Rodentia</taxon>
        <taxon>Myomorpha</taxon>
        <taxon>Muroidea</taxon>
        <taxon>Muridae</taxon>
        <taxon>Murinae</taxon>
        <taxon>Mus</taxon>
        <taxon>Mus</taxon>
    </lineage>
</organism>
<accession>Q1EG27</accession>
<accession>A2AR19</accession>
<accession>Q1EG26</accession>
<comment type="function">
    <text evidence="2 8 9">Probable actin-based motor with a protein kinase activity (By similarity). Required for normal cochlear hair bundle development and hearing. Plays an important role in the early steps of cochlear hair bundle morphogenesis. Influences the number and lengths of stereocilia to be produced and limits the growth of microvilli within the forming auditory hair bundles thereby contributing to the architecture of the hair bundle, including its staircase pattern (PubMed:26754646). Involved in the elongation of actin in stereocilia tips by transporting the actin regulatory factor ESPN to the plus ends of actin filaments (PubMed:22264607).</text>
</comment>
<comment type="catalytic activity">
    <reaction>
        <text>L-seryl-[protein] + ATP = O-phospho-L-seryl-[protein] + ADP + H(+)</text>
        <dbReference type="Rhea" id="RHEA:17989"/>
        <dbReference type="Rhea" id="RHEA-COMP:9863"/>
        <dbReference type="Rhea" id="RHEA-COMP:11604"/>
        <dbReference type="ChEBI" id="CHEBI:15378"/>
        <dbReference type="ChEBI" id="CHEBI:29999"/>
        <dbReference type="ChEBI" id="CHEBI:30616"/>
        <dbReference type="ChEBI" id="CHEBI:83421"/>
        <dbReference type="ChEBI" id="CHEBI:456216"/>
        <dbReference type="EC" id="2.7.11.1"/>
    </reaction>
</comment>
<comment type="catalytic activity">
    <reaction>
        <text>L-threonyl-[protein] + ATP = O-phospho-L-threonyl-[protein] + ADP + H(+)</text>
        <dbReference type="Rhea" id="RHEA:46608"/>
        <dbReference type="Rhea" id="RHEA-COMP:11060"/>
        <dbReference type="Rhea" id="RHEA-COMP:11605"/>
        <dbReference type="ChEBI" id="CHEBI:15378"/>
        <dbReference type="ChEBI" id="CHEBI:30013"/>
        <dbReference type="ChEBI" id="CHEBI:30616"/>
        <dbReference type="ChEBI" id="CHEBI:61977"/>
        <dbReference type="ChEBI" id="CHEBI:456216"/>
        <dbReference type="EC" id="2.7.11.1"/>
    </reaction>
</comment>
<comment type="subunit">
    <text evidence="10 11">Interacts (via C-terminus) with ESPN (PubMed:26785147, PubMed:26926603). Interacts (via C-terminus) with ESPNL (PubMed:26926603).</text>
</comment>
<comment type="subcellular location">
    <subcellularLocation>
        <location evidence="1">Cytoplasm</location>
        <location evidence="1">Cytoskeleton</location>
    </subcellularLocation>
    <subcellularLocation>
        <location evidence="9">Cell projection</location>
        <location evidence="9">Stereocilium</location>
    </subcellularLocation>
</comment>
<comment type="alternative products">
    <event type="alternative splicing"/>
    <isoform>
        <id>Q1EG27-1</id>
        <name>1</name>
        <name>Myosin IIIB1</name>
        <sequence type="displayed"/>
    </isoform>
    <isoform>
        <id>Q1EG27-2</id>
        <name>2</name>
        <name>Myosin IIIB2</name>
        <sequence type="described" ref="VSP_036028 VSP_023112"/>
    </isoform>
</comment>
<comment type="tissue specificity">
    <text evidence="9 11">Expressed in the cochlear hair cells (at protein level) (PubMed:26754646). Expressed in utricle hair bundles (at protein level) (PubMed:26926603).</text>
</comment>
<comment type="disruption phenotype">
    <text evidence="9">MYO3B single knockout mice do not exhibit early hearing impairment whereas mice with a double knockout of MYO3A and MYO3B are profoundly deaf at 1 month of age. Cochlear hair bundles have abnormally long stereocilia and show dynamic shape defects during development.</text>
</comment>
<comment type="similarity">
    <text evidence="13">In the C-terminal section; belongs to the TRAFAC class myosin-kinesin ATPase superfamily. Myosin family.</text>
</comment>
<comment type="similarity">
    <text evidence="13">In the N-terminal section; belongs to the protein kinase superfamily. STE Ser/Thr protein kinase family.</text>
</comment>
<dbReference type="EC" id="2.7.11.1"/>
<dbReference type="EMBL" id="AY830392">
    <property type="protein sequence ID" value="AAX59998.2"/>
    <property type="molecule type" value="mRNA"/>
</dbReference>
<dbReference type="EMBL" id="AY830393">
    <property type="protein sequence ID" value="AAX59999.2"/>
    <property type="molecule type" value="mRNA"/>
</dbReference>
<dbReference type="EMBL" id="AL845263">
    <property type="status" value="NOT_ANNOTATED_CDS"/>
    <property type="molecule type" value="Genomic_DNA"/>
</dbReference>
<dbReference type="EMBL" id="AL929164">
    <property type="status" value="NOT_ANNOTATED_CDS"/>
    <property type="molecule type" value="Genomic_DNA"/>
</dbReference>
<dbReference type="RefSeq" id="NP_796350.2">
    <property type="nucleotide sequence ID" value="NM_177376.4"/>
</dbReference>
<dbReference type="RefSeq" id="XP_017174528.1">
    <molecule id="Q1EG27-1"/>
    <property type="nucleotide sequence ID" value="XM_017319039.1"/>
</dbReference>
<dbReference type="PDB" id="5ET0">
    <property type="method" value="X-ray"/>
    <property type="resolution" value="2.30 A"/>
    <property type="chains" value="B/D=1252-1305"/>
</dbReference>
<dbReference type="PDB" id="5ET1">
    <property type="method" value="X-ray"/>
    <property type="resolution" value="1.65 A"/>
    <property type="chains" value="C/D=1216-1251"/>
</dbReference>
<dbReference type="PDBsum" id="5ET0"/>
<dbReference type="PDBsum" id="5ET1"/>
<dbReference type="SMR" id="Q1EG27"/>
<dbReference type="BioGRID" id="236763">
    <property type="interactions" value="2"/>
</dbReference>
<dbReference type="CORUM" id="Q1EG27"/>
<dbReference type="FunCoup" id="Q1EG27">
    <property type="interactions" value="437"/>
</dbReference>
<dbReference type="STRING" id="10090.ENSMUSP00000055362"/>
<dbReference type="iPTMnet" id="Q1EG27"/>
<dbReference type="PhosphoSitePlus" id="Q1EG27"/>
<dbReference type="jPOST" id="Q1EG27"/>
<dbReference type="PaxDb" id="10090-ENSMUSP00000055362"/>
<dbReference type="ProteomicsDB" id="287586">
    <molecule id="Q1EG27-1"/>
</dbReference>
<dbReference type="ProteomicsDB" id="287587">
    <molecule id="Q1EG27-2"/>
</dbReference>
<dbReference type="Antibodypedia" id="33828">
    <property type="antibodies" value="155 antibodies from 26 providers"/>
</dbReference>
<dbReference type="DNASU" id="329421"/>
<dbReference type="Ensembl" id="ENSMUST00000112243.8">
    <molecule id="Q1EG27-1"/>
    <property type="protein sequence ID" value="ENSMUSP00000107862.2"/>
    <property type="gene ID" value="ENSMUSG00000042064.14"/>
</dbReference>
<dbReference type="GeneID" id="329421"/>
<dbReference type="KEGG" id="mmu:329421"/>
<dbReference type="AGR" id="MGI:2448580"/>
<dbReference type="CTD" id="140469"/>
<dbReference type="MGI" id="MGI:2448580">
    <property type="gene designation" value="Myo3b"/>
</dbReference>
<dbReference type="VEuPathDB" id="HostDB:ENSMUSG00000042064"/>
<dbReference type="eggNOG" id="KOG0587">
    <property type="taxonomic scope" value="Eukaryota"/>
</dbReference>
<dbReference type="eggNOG" id="KOG4229">
    <property type="taxonomic scope" value="Eukaryota"/>
</dbReference>
<dbReference type="GeneTree" id="ENSGT00940000159309"/>
<dbReference type="HOGENOM" id="CLU_000192_10_2_1"/>
<dbReference type="InParanoid" id="Q1EG27"/>
<dbReference type="OrthoDB" id="6108017at2759"/>
<dbReference type="PhylomeDB" id="Q1EG27"/>
<dbReference type="BioGRID-ORCS" id="329421">
    <property type="hits" value="2 hits in 79 CRISPR screens"/>
</dbReference>
<dbReference type="ChiTaRS" id="Myo3b">
    <property type="organism name" value="mouse"/>
</dbReference>
<dbReference type="EvolutionaryTrace" id="Q1EG27"/>
<dbReference type="PRO" id="PR:Q1EG27"/>
<dbReference type="Proteomes" id="UP000000589">
    <property type="component" value="Chromosome 2"/>
</dbReference>
<dbReference type="RNAct" id="Q1EG27">
    <property type="molecule type" value="protein"/>
</dbReference>
<dbReference type="Bgee" id="ENSMUSG00000042064">
    <property type="expression patterns" value="Expressed in otolith organ and 30 other cell types or tissues"/>
</dbReference>
<dbReference type="ExpressionAtlas" id="Q1EG27">
    <property type="expression patterns" value="baseline and differential"/>
</dbReference>
<dbReference type="GO" id="GO:0005829">
    <property type="term" value="C:cytosol"/>
    <property type="evidence" value="ECO:0000304"/>
    <property type="project" value="Reactome"/>
</dbReference>
<dbReference type="GO" id="GO:0032433">
    <property type="term" value="C:filopodium tip"/>
    <property type="evidence" value="ECO:0000353"/>
    <property type="project" value="MGI"/>
</dbReference>
<dbReference type="GO" id="GO:0016459">
    <property type="term" value="C:myosin complex"/>
    <property type="evidence" value="ECO:0007669"/>
    <property type="project" value="UniProtKB-KW"/>
</dbReference>
<dbReference type="GO" id="GO:0001917">
    <property type="term" value="C:photoreceptor inner segment"/>
    <property type="evidence" value="ECO:0000314"/>
    <property type="project" value="MGI"/>
</dbReference>
<dbReference type="GO" id="GO:0001750">
    <property type="term" value="C:photoreceptor outer segment"/>
    <property type="evidence" value="ECO:0000314"/>
    <property type="project" value="MGI"/>
</dbReference>
<dbReference type="GO" id="GO:0032426">
    <property type="term" value="C:stereocilium tip"/>
    <property type="evidence" value="ECO:0000314"/>
    <property type="project" value="UniProtKB"/>
</dbReference>
<dbReference type="GO" id="GO:0003779">
    <property type="term" value="F:actin binding"/>
    <property type="evidence" value="ECO:0007669"/>
    <property type="project" value="UniProtKB-KW"/>
</dbReference>
<dbReference type="GO" id="GO:0005524">
    <property type="term" value="F:ATP binding"/>
    <property type="evidence" value="ECO:0007669"/>
    <property type="project" value="UniProtKB-KW"/>
</dbReference>
<dbReference type="GO" id="GO:0000146">
    <property type="term" value="F:microfilament motor activity"/>
    <property type="evidence" value="ECO:0000314"/>
    <property type="project" value="MGI"/>
</dbReference>
<dbReference type="GO" id="GO:0106310">
    <property type="term" value="F:protein serine kinase activity"/>
    <property type="evidence" value="ECO:0007669"/>
    <property type="project" value="RHEA"/>
</dbReference>
<dbReference type="GO" id="GO:0004674">
    <property type="term" value="F:protein serine/threonine kinase activity"/>
    <property type="evidence" value="ECO:0000314"/>
    <property type="project" value="MGI"/>
</dbReference>
<dbReference type="GO" id="GO:0060088">
    <property type="term" value="P:auditory receptor cell stereocilium organization"/>
    <property type="evidence" value="ECO:0000315"/>
    <property type="project" value="MGI"/>
</dbReference>
<dbReference type="GO" id="GO:0090103">
    <property type="term" value="P:cochlea morphogenesis"/>
    <property type="evidence" value="ECO:0000315"/>
    <property type="project" value="UniProtKB"/>
</dbReference>
<dbReference type="GO" id="GO:0051491">
    <property type="term" value="P:positive regulation of filopodium assembly"/>
    <property type="evidence" value="ECO:0000353"/>
    <property type="project" value="MGI"/>
</dbReference>
<dbReference type="GO" id="GO:0030832">
    <property type="term" value="P:regulation of actin filament length"/>
    <property type="evidence" value="ECO:0000315"/>
    <property type="project" value="MGI"/>
</dbReference>
<dbReference type="GO" id="GO:0007605">
    <property type="term" value="P:sensory perception of sound"/>
    <property type="evidence" value="ECO:0000315"/>
    <property type="project" value="UniProtKB"/>
</dbReference>
<dbReference type="GO" id="GO:0007601">
    <property type="term" value="P:visual perception"/>
    <property type="evidence" value="ECO:0007669"/>
    <property type="project" value="UniProtKB-KW"/>
</dbReference>
<dbReference type="CDD" id="cd23767">
    <property type="entry name" value="IQCD"/>
    <property type="match status" value="1"/>
</dbReference>
<dbReference type="CDD" id="cd01379">
    <property type="entry name" value="MYSc_Myo3"/>
    <property type="match status" value="1"/>
</dbReference>
<dbReference type="FunFam" id="1.10.10.820:FF:000006">
    <property type="entry name" value="Myosin IIIA"/>
    <property type="match status" value="1"/>
</dbReference>
<dbReference type="FunFam" id="1.10.510.10:FF:000247">
    <property type="entry name" value="Myosin IIIA"/>
    <property type="match status" value="1"/>
</dbReference>
<dbReference type="FunFam" id="1.20.58.530:FF:000010">
    <property type="entry name" value="Myosin IIIA"/>
    <property type="match status" value="1"/>
</dbReference>
<dbReference type="FunFam" id="1.20.5.190:FF:000082">
    <property type="entry name" value="Myosin IIIB"/>
    <property type="match status" value="1"/>
</dbReference>
<dbReference type="Gene3D" id="1.10.10.820">
    <property type="match status" value="1"/>
</dbReference>
<dbReference type="Gene3D" id="1.20.5.190">
    <property type="match status" value="1"/>
</dbReference>
<dbReference type="Gene3D" id="1.20.58.530">
    <property type="match status" value="1"/>
</dbReference>
<dbReference type="Gene3D" id="6.20.240.20">
    <property type="match status" value="1"/>
</dbReference>
<dbReference type="Gene3D" id="3.40.850.10">
    <property type="entry name" value="Kinesin motor domain"/>
    <property type="match status" value="1"/>
</dbReference>
<dbReference type="Gene3D" id="1.20.120.720">
    <property type="entry name" value="Myosin VI head, motor domain, U50 subdomain"/>
    <property type="match status" value="1"/>
</dbReference>
<dbReference type="Gene3D" id="1.10.510.10">
    <property type="entry name" value="Transferase(Phosphotransferase) domain 1"/>
    <property type="match status" value="1"/>
</dbReference>
<dbReference type="InterPro" id="IPR000048">
    <property type="entry name" value="IQ_motif_EF-hand-BS"/>
</dbReference>
<dbReference type="InterPro" id="IPR011009">
    <property type="entry name" value="Kinase-like_dom_sf"/>
</dbReference>
<dbReference type="InterPro" id="IPR036961">
    <property type="entry name" value="Kinesin_motor_dom_sf"/>
</dbReference>
<dbReference type="InterPro" id="IPR052409">
    <property type="entry name" value="Myosin-III_kinase_activity"/>
</dbReference>
<dbReference type="InterPro" id="IPR001609">
    <property type="entry name" value="Myosin_head_motor_dom-like"/>
</dbReference>
<dbReference type="InterPro" id="IPR036083">
    <property type="entry name" value="MYSc_Myo3"/>
</dbReference>
<dbReference type="InterPro" id="IPR027417">
    <property type="entry name" value="P-loop_NTPase"/>
</dbReference>
<dbReference type="InterPro" id="IPR000719">
    <property type="entry name" value="Prot_kinase_dom"/>
</dbReference>
<dbReference type="InterPro" id="IPR017441">
    <property type="entry name" value="Protein_kinase_ATP_BS"/>
</dbReference>
<dbReference type="InterPro" id="IPR008271">
    <property type="entry name" value="Ser/Thr_kinase_AS"/>
</dbReference>
<dbReference type="PANTHER" id="PTHR46256">
    <property type="entry name" value="AGAP011099-PA"/>
    <property type="match status" value="1"/>
</dbReference>
<dbReference type="PANTHER" id="PTHR46256:SF1">
    <property type="entry name" value="MYOSIN-IIIB"/>
    <property type="match status" value="1"/>
</dbReference>
<dbReference type="Pfam" id="PF00612">
    <property type="entry name" value="IQ"/>
    <property type="match status" value="1"/>
</dbReference>
<dbReference type="Pfam" id="PF00063">
    <property type="entry name" value="Myosin_head"/>
    <property type="match status" value="1"/>
</dbReference>
<dbReference type="Pfam" id="PF00069">
    <property type="entry name" value="Pkinase"/>
    <property type="match status" value="1"/>
</dbReference>
<dbReference type="PRINTS" id="PR00193">
    <property type="entry name" value="MYOSINHEAVY"/>
</dbReference>
<dbReference type="SMART" id="SM00015">
    <property type="entry name" value="IQ"/>
    <property type="match status" value="2"/>
</dbReference>
<dbReference type="SMART" id="SM00242">
    <property type="entry name" value="MYSc"/>
    <property type="match status" value="1"/>
</dbReference>
<dbReference type="SMART" id="SM00220">
    <property type="entry name" value="S_TKc"/>
    <property type="match status" value="1"/>
</dbReference>
<dbReference type="SUPFAM" id="SSF52540">
    <property type="entry name" value="P-loop containing nucleoside triphosphate hydrolases"/>
    <property type="match status" value="1"/>
</dbReference>
<dbReference type="SUPFAM" id="SSF56112">
    <property type="entry name" value="Protein kinase-like (PK-like)"/>
    <property type="match status" value="1"/>
</dbReference>
<dbReference type="PROSITE" id="PS50096">
    <property type="entry name" value="IQ"/>
    <property type="match status" value="2"/>
</dbReference>
<dbReference type="PROSITE" id="PS51456">
    <property type="entry name" value="MYOSIN_MOTOR"/>
    <property type="match status" value="1"/>
</dbReference>
<dbReference type="PROSITE" id="PS00107">
    <property type="entry name" value="PROTEIN_KINASE_ATP"/>
    <property type="match status" value="1"/>
</dbReference>
<dbReference type="PROSITE" id="PS50011">
    <property type="entry name" value="PROTEIN_KINASE_DOM"/>
    <property type="match status" value="1"/>
</dbReference>
<dbReference type="PROSITE" id="PS00108">
    <property type="entry name" value="PROTEIN_KINASE_ST"/>
    <property type="match status" value="1"/>
</dbReference>
<feature type="chain" id="PRO_0000277830" description="Myosin-IIIb">
    <location>
        <begin position="1"/>
        <end position="1305"/>
    </location>
</feature>
<feature type="domain" description="Protein kinase" evidence="4">
    <location>
        <begin position="15"/>
        <end position="281"/>
    </location>
</feature>
<feature type="domain" description="Myosin motor" evidence="5">
    <location>
        <begin position="331"/>
        <end position="1046"/>
    </location>
</feature>
<feature type="domain" description="IQ 1" evidence="3">
    <location>
        <begin position="1048"/>
        <end position="1077"/>
    </location>
</feature>
<feature type="domain" description="IQ 2" evidence="3">
    <location>
        <begin position="1075"/>
        <end position="1104"/>
    </location>
</feature>
<feature type="region of interest" description="Actin-binding" evidence="5">
    <location>
        <begin position="927"/>
        <end position="949"/>
    </location>
</feature>
<feature type="region of interest" description="Disordered" evidence="7">
    <location>
        <begin position="1093"/>
        <end position="1164"/>
    </location>
</feature>
<feature type="region of interest" description="Disordered" evidence="7">
    <location>
        <begin position="1200"/>
        <end position="1233"/>
    </location>
</feature>
<feature type="active site" description="Proton acceptor" evidence="4 6">
    <location>
        <position position="144"/>
    </location>
</feature>
<feature type="binding site" evidence="4">
    <location>
        <begin position="21"/>
        <end position="29"/>
    </location>
    <ligand>
        <name>ATP</name>
        <dbReference type="ChEBI" id="CHEBI:30616"/>
    </ligand>
</feature>
<feature type="binding site" evidence="4">
    <location>
        <position position="44"/>
    </location>
    <ligand>
        <name>ATP</name>
        <dbReference type="ChEBI" id="CHEBI:30616"/>
    </ligand>
</feature>
<feature type="splice variant" id="VSP_036028" description="In isoform 2." evidence="12">
    <original>K</original>
    <variation>KKSPHSVPSYVLNTSPPK</variation>
    <location>
        <position position="898"/>
    </location>
</feature>
<feature type="splice variant" id="VSP_023112" description="In isoform 2." evidence="12">
    <location>
        <begin position="1149"/>
        <end position="1209"/>
    </location>
</feature>
<feature type="sequence conflict" description="In Ref. 1; AAX59998/AAX59999." evidence="13" ref="1">
    <original>E</original>
    <variation>K</variation>
    <location>
        <position position="505"/>
    </location>
</feature>
<feature type="helix" evidence="15">
    <location>
        <begin position="1223"/>
        <end position="1225"/>
    </location>
</feature>
<feature type="helix" evidence="15">
    <location>
        <begin position="1234"/>
        <end position="1241"/>
    </location>
</feature>
<feature type="helix" evidence="14">
    <location>
        <begin position="1273"/>
        <end position="1275"/>
    </location>
</feature>
<gene>
    <name type="primary">Myo3b</name>
</gene>
<name>MYO3B_MOUSE</name>
<keyword id="KW-0002">3D-structure</keyword>
<keyword id="KW-0009">Actin-binding</keyword>
<keyword id="KW-0025">Alternative splicing</keyword>
<keyword id="KW-0067">ATP-binding</keyword>
<keyword id="KW-0966">Cell projection</keyword>
<keyword id="KW-0963">Cytoplasm</keyword>
<keyword id="KW-0206">Cytoskeleton</keyword>
<keyword id="KW-1009">Hearing</keyword>
<keyword id="KW-0418">Kinase</keyword>
<keyword id="KW-0505">Motor protein</keyword>
<keyword id="KW-0518">Myosin</keyword>
<keyword id="KW-0547">Nucleotide-binding</keyword>
<keyword id="KW-1185">Reference proteome</keyword>
<keyword id="KW-0677">Repeat</keyword>
<keyword id="KW-0716">Sensory transduction</keyword>
<keyword id="KW-0723">Serine/threonine-protein kinase</keyword>
<keyword id="KW-0808">Transferase</keyword>
<keyword id="KW-0844">Vision</keyword>
<protein>
    <recommendedName>
        <fullName>Myosin-IIIb</fullName>
        <ecNumber>2.7.11.1</ecNumber>
    </recommendedName>
</protein>
<proteinExistence type="evidence at protein level"/>